<keyword id="KW-0227">DNA damage</keyword>
<keyword id="KW-0234">DNA repair</keyword>
<keyword id="KW-0255">Endonuclease</keyword>
<keyword id="KW-0378">Hydrolase</keyword>
<keyword id="KW-0479">Metal-binding</keyword>
<keyword id="KW-0540">Nuclease</keyword>
<keyword id="KW-0862">Zinc</keyword>
<name>END4_CHLAD</name>
<gene>
    <name evidence="1" type="primary">nfo</name>
    <name type="ordered locus">Cagg_2551</name>
</gene>
<proteinExistence type="inferred from homology"/>
<sequence length="286" mass="31392">MPRFGAHMSISGGVSKSFARGESVGLDAMQIFAKNERQWTAKPISAEEMAAFQAEQQRTGIHPVIVHDSYLINLAAPADDLREKSIVAFADELERCAQLKIPYLVTHPGAHTGIGEEAGLVRVADAISRLLAEGVGGTTMILLETTAGQGTALGYRFEHLARLFELIPYHDRLGVCVDTCHIFAAGYDIRDPDTYDATFAELDRLVGLERVKCFHLNDSQKDLGSRVDRHAHIGQGCIGTEAFRLLVNDPRFAHLPMIIETPKGEDMAEDRMNLALLRSLVRITAA</sequence>
<dbReference type="EC" id="3.1.21.2" evidence="1"/>
<dbReference type="EMBL" id="CP001337">
    <property type="protein sequence ID" value="ACL25420.1"/>
    <property type="molecule type" value="Genomic_DNA"/>
</dbReference>
<dbReference type="RefSeq" id="WP_015941278.1">
    <property type="nucleotide sequence ID" value="NC_011831.1"/>
</dbReference>
<dbReference type="SMR" id="B8G418"/>
<dbReference type="STRING" id="326427.Cagg_2551"/>
<dbReference type="KEGG" id="cag:Cagg_2551"/>
<dbReference type="eggNOG" id="COG0648">
    <property type="taxonomic scope" value="Bacteria"/>
</dbReference>
<dbReference type="HOGENOM" id="CLU_025885_0_1_0"/>
<dbReference type="OrthoDB" id="9805666at2"/>
<dbReference type="Proteomes" id="UP000002508">
    <property type="component" value="Chromosome"/>
</dbReference>
<dbReference type="GO" id="GO:0008833">
    <property type="term" value="F:deoxyribonuclease IV (phage-T4-induced) activity"/>
    <property type="evidence" value="ECO:0007669"/>
    <property type="project" value="UniProtKB-UniRule"/>
</dbReference>
<dbReference type="GO" id="GO:0003677">
    <property type="term" value="F:DNA binding"/>
    <property type="evidence" value="ECO:0007669"/>
    <property type="project" value="InterPro"/>
</dbReference>
<dbReference type="GO" id="GO:0003906">
    <property type="term" value="F:DNA-(apurinic or apyrimidinic site) endonuclease activity"/>
    <property type="evidence" value="ECO:0007669"/>
    <property type="project" value="TreeGrafter"/>
</dbReference>
<dbReference type="GO" id="GO:0008081">
    <property type="term" value="F:phosphoric diester hydrolase activity"/>
    <property type="evidence" value="ECO:0007669"/>
    <property type="project" value="TreeGrafter"/>
</dbReference>
<dbReference type="GO" id="GO:0008270">
    <property type="term" value="F:zinc ion binding"/>
    <property type="evidence" value="ECO:0007669"/>
    <property type="project" value="UniProtKB-UniRule"/>
</dbReference>
<dbReference type="GO" id="GO:0006284">
    <property type="term" value="P:base-excision repair"/>
    <property type="evidence" value="ECO:0007669"/>
    <property type="project" value="TreeGrafter"/>
</dbReference>
<dbReference type="CDD" id="cd00019">
    <property type="entry name" value="AP2Ec"/>
    <property type="match status" value="1"/>
</dbReference>
<dbReference type="FunFam" id="3.20.20.150:FF:000001">
    <property type="entry name" value="Probable endonuclease 4"/>
    <property type="match status" value="1"/>
</dbReference>
<dbReference type="Gene3D" id="3.20.20.150">
    <property type="entry name" value="Divalent-metal-dependent TIM barrel enzymes"/>
    <property type="match status" value="1"/>
</dbReference>
<dbReference type="HAMAP" id="MF_00152">
    <property type="entry name" value="Nfo"/>
    <property type="match status" value="1"/>
</dbReference>
<dbReference type="InterPro" id="IPR001719">
    <property type="entry name" value="AP_endonuc_2"/>
</dbReference>
<dbReference type="InterPro" id="IPR018246">
    <property type="entry name" value="AP_endonuc_F2_Zn_BS"/>
</dbReference>
<dbReference type="InterPro" id="IPR036237">
    <property type="entry name" value="Xyl_isomerase-like_sf"/>
</dbReference>
<dbReference type="InterPro" id="IPR013022">
    <property type="entry name" value="Xyl_isomerase-like_TIM-brl"/>
</dbReference>
<dbReference type="NCBIfam" id="TIGR00587">
    <property type="entry name" value="nfo"/>
    <property type="match status" value="1"/>
</dbReference>
<dbReference type="PANTHER" id="PTHR21445:SF0">
    <property type="entry name" value="APURINIC-APYRIMIDINIC ENDONUCLEASE"/>
    <property type="match status" value="1"/>
</dbReference>
<dbReference type="PANTHER" id="PTHR21445">
    <property type="entry name" value="ENDONUCLEASE IV ENDODEOXYRIBONUCLEASE IV"/>
    <property type="match status" value="1"/>
</dbReference>
<dbReference type="Pfam" id="PF01261">
    <property type="entry name" value="AP_endonuc_2"/>
    <property type="match status" value="1"/>
</dbReference>
<dbReference type="SMART" id="SM00518">
    <property type="entry name" value="AP2Ec"/>
    <property type="match status" value="1"/>
</dbReference>
<dbReference type="SUPFAM" id="SSF51658">
    <property type="entry name" value="Xylose isomerase-like"/>
    <property type="match status" value="1"/>
</dbReference>
<dbReference type="PROSITE" id="PS00729">
    <property type="entry name" value="AP_NUCLEASE_F2_1"/>
    <property type="match status" value="1"/>
</dbReference>
<dbReference type="PROSITE" id="PS00730">
    <property type="entry name" value="AP_NUCLEASE_F2_2"/>
    <property type="match status" value="1"/>
</dbReference>
<dbReference type="PROSITE" id="PS00731">
    <property type="entry name" value="AP_NUCLEASE_F2_3"/>
    <property type="match status" value="1"/>
</dbReference>
<dbReference type="PROSITE" id="PS51432">
    <property type="entry name" value="AP_NUCLEASE_F2_4"/>
    <property type="match status" value="1"/>
</dbReference>
<protein>
    <recommendedName>
        <fullName evidence="1">Probable endonuclease 4</fullName>
        <ecNumber evidence="1">3.1.21.2</ecNumber>
    </recommendedName>
    <alternativeName>
        <fullName evidence="1">Endodeoxyribonuclease IV</fullName>
    </alternativeName>
    <alternativeName>
        <fullName evidence="1">Endonuclease IV</fullName>
    </alternativeName>
</protein>
<comment type="function">
    <text evidence="1">Endonuclease IV plays a role in DNA repair. It cleaves phosphodiester bonds at apurinic or apyrimidinic (AP) sites, generating a 3'-hydroxyl group and a 5'-terminal sugar phosphate.</text>
</comment>
<comment type="catalytic activity">
    <reaction evidence="1">
        <text>Endonucleolytic cleavage to 5'-phosphooligonucleotide end-products.</text>
        <dbReference type="EC" id="3.1.21.2"/>
    </reaction>
</comment>
<comment type="cofactor">
    <cofactor evidence="1">
        <name>Zn(2+)</name>
        <dbReference type="ChEBI" id="CHEBI:29105"/>
    </cofactor>
    <text evidence="1">Binds 3 Zn(2+) ions.</text>
</comment>
<comment type="similarity">
    <text evidence="1">Belongs to the AP endonuclease 2 family.</text>
</comment>
<reference key="1">
    <citation type="submission" date="2008-12" db="EMBL/GenBank/DDBJ databases">
        <title>Complete sequence of Chloroflexus aggregans DSM 9485.</title>
        <authorList>
            <consortium name="US DOE Joint Genome Institute"/>
            <person name="Lucas S."/>
            <person name="Copeland A."/>
            <person name="Lapidus A."/>
            <person name="Glavina del Rio T."/>
            <person name="Dalin E."/>
            <person name="Tice H."/>
            <person name="Pitluck S."/>
            <person name="Foster B."/>
            <person name="Larimer F."/>
            <person name="Land M."/>
            <person name="Hauser L."/>
            <person name="Kyrpides N."/>
            <person name="Mikhailova N."/>
            <person name="Bryant D.A."/>
            <person name="Richardson P."/>
        </authorList>
    </citation>
    <scope>NUCLEOTIDE SEQUENCE [LARGE SCALE GENOMIC DNA]</scope>
    <source>
        <strain>MD-66 / DSM 9485</strain>
    </source>
</reference>
<accession>B8G418</accession>
<organism>
    <name type="scientific">Chloroflexus aggregans (strain MD-66 / DSM 9485)</name>
    <dbReference type="NCBI Taxonomy" id="326427"/>
    <lineage>
        <taxon>Bacteria</taxon>
        <taxon>Bacillati</taxon>
        <taxon>Chloroflexota</taxon>
        <taxon>Chloroflexia</taxon>
        <taxon>Chloroflexales</taxon>
        <taxon>Chloroflexineae</taxon>
        <taxon>Chloroflexaceae</taxon>
        <taxon>Chloroflexus</taxon>
    </lineage>
</organism>
<feature type="chain" id="PRO_1000123322" description="Probable endonuclease 4">
    <location>
        <begin position="1"/>
        <end position="286"/>
    </location>
</feature>
<feature type="binding site" evidence="1">
    <location>
        <position position="67"/>
    </location>
    <ligand>
        <name>Zn(2+)</name>
        <dbReference type="ChEBI" id="CHEBI:29105"/>
        <label>1</label>
    </ligand>
</feature>
<feature type="binding site" evidence="1">
    <location>
        <position position="107"/>
    </location>
    <ligand>
        <name>Zn(2+)</name>
        <dbReference type="ChEBI" id="CHEBI:29105"/>
        <label>1</label>
    </ligand>
</feature>
<feature type="binding site" evidence="1">
    <location>
        <position position="144"/>
    </location>
    <ligand>
        <name>Zn(2+)</name>
        <dbReference type="ChEBI" id="CHEBI:29105"/>
        <label>1</label>
    </ligand>
</feature>
<feature type="binding site" evidence="1">
    <location>
        <position position="144"/>
    </location>
    <ligand>
        <name>Zn(2+)</name>
        <dbReference type="ChEBI" id="CHEBI:29105"/>
        <label>2</label>
    </ligand>
</feature>
<feature type="binding site" evidence="1">
    <location>
        <position position="178"/>
    </location>
    <ligand>
        <name>Zn(2+)</name>
        <dbReference type="ChEBI" id="CHEBI:29105"/>
        <label>2</label>
    </ligand>
</feature>
<feature type="binding site" evidence="1">
    <location>
        <position position="181"/>
    </location>
    <ligand>
        <name>Zn(2+)</name>
        <dbReference type="ChEBI" id="CHEBI:29105"/>
        <label>3</label>
    </ligand>
</feature>
<feature type="binding site" evidence="1">
    <location>
        <position position="215"/>
    </location>
    <ligand>
        <name>Zn(2+)</name>
        <dbReference type="ChEBI" id="CHEBI:29105"/>
        <label>2</label>
    </ligand>
</feature>
<feature type="binding site" evidence="1">
    <location>
        <position position="228"/>
    </location>
    <ligand>
        <name>Zn(2+)</name>
        <dbReference type="ChEBI" id="CHEBI:29105"/>
        <label>3</label>
    </ligand>
</feature>
<feature type="binding site" evidence="1">
    <location>
        <position position="230"/>
    </location>
    <ligand>
        <name>Zn(2+)</name>
        <dbReference type="ChEBI" id="CHEBI:29105"/>
        <label>3</label>
    </ligand>
</feature>
<feature type="binding site" evidence="1">
    <location>
        <position position="260"/>
    </location>
    <ligand>
        <name>Zn(2+)</name>
        <dbReference type="ChEBI" id="CHEBI:29105"/>
        <label>2</label>
    </ligand>
</feature>
<evidence type="ECO:0000255" key="1">
    <source>
        <dbReference type="HAMAP-Rule" id="MF_00152"/>
    </source>
</evidence>